<protein>
    <recommendedName>
        <fullName evidence="1">Isoleucine--tRNA ligase</fullName>
        <ecNumber evidence="1">6.1.1.5</ecNumber>
    </recommendedName>
    <alternativeName>
        <fullName evidence="1">Isoleucyl-tRNA synthetase</fullName>
        <shortName evidence="1">IleRS</shortName>
    </alternativeName>
</protein>
<keyword id="KW-0030">Aminoacyl-tRNA synthetase</keyword>
<keyword id="KW-0067">ATP-binding</keyword>
<keyword id="KW-0963">Cytoplasm</keyword>
<keyword id="KW-0436">Ligase</keyword>
<keyword id="KW-0479">Metal-binding</keyword>
<keyword id="KW-0547">Nucleotide-binding</keyword>
<keyword id="KW-0648">Protein biosynthesis</keyword>
<keyword id="KW-0862">Zinc</keyword>
<name>SYI_RICCK</name>
<organism>
    <name type="scientific">Rickettsia canadensis (strain McKiel)</name>
    <dbReference type="NCBI Taxonomy" id="293613"/>
    <lineage>
        <taxon>Bacteria</taxon>
        <taxon>Pseudomonadati</taxon>
        <taxon>Pseudomonadota</taxon>
        <taxon>Alphaproteobacteria</taxon>
        <taxon>Rickettsiales</taxon>
        <taxon>Rickettsiaceae</taxon>
        <taxon>Rickettsieae</taxon>
        <taxon>Rickettsia</taxon>
        <taxon>belli group</taxon>
    </lineage>
</organism>
<comment type="function">
    <text evidence="1">Catalyzes the attachment of isoleucine to tRNA(Ile). As IleRS can inadvertently accommodate and process structurally similar amino acids such as valine, to avoid such errors it has two additional distinct tRNA(Ile)-dependent editing activities. One activity is designated as 'pretransfer' editing and involves the hydrolysis of activated Val-AMP. The other activity is designated 'posttransfer' editing and involves deacylation of mischarged Val-tRNA(Ile).</text>
</comment>
<comment type="catalytic activity">
    <reaction evidence="1">
        <text>tRNA(Ile) + L-isoleucine + ATP = L-isoleucyl-tRNA(Ile) + AMP + diphosphate</text>
        <dbReference type="Rhea" id="RHEA:11060"/>
        <dbReference type="Rhea" id="RHEA-COMP:9666"/>
        <dbReference type="Rhea" id="RHEA-COMP:9695"/>
        <dbReference type="ChEBI" id="CHEBI:30616"/>
        <dbReference type="ChEBI" id="CHEBI:33019"/>
        <dbReference type="ChEBI" id="CHEBI:58045"/>
        <dbReference type="ChEBI" id="CHEBI:78442"/>
        <dbReference type="ChEBI" id="CHEBI:78528"/>
        <dbReference type="ChEBI" id="CHEBI:456215"/>
        <dbReference type="EC" id="6.1.1.5"/>
    </reaction>
</comment>
<comment type="cofactor">
    <cofactor evidence="1">
        <name>Zn(2+)</name>
        <dbReference type="ChEBI" id="CHEBI:29105"/>
    </cofactor>
</comment>
<comment type="subunit">
    <text evidence="1">Monomer.</text>
</comment>
<comment type="subcellular location">
    <subcellularLocation>
        <location evidence="1">Cytoplasm</location>
    </subcellularLocation>
</comment>
<comment type="domain">
    <text evidence="1">IleRS has two distinct active sites: one for aminoacylation and one for editing. The misactivated valine is translocated from the active site to the editing site, which sterically excludes the correctly activated isoleucine. The single editing site contains two valyl binding pockets, one specific for each substrate (Val-AMP or Val-tRNA(Ile)).</text>
</comment>
<comment type="similarity">
    <text evidence="1">Belongs to the class-I aminoacyl-tRNA synthetase family. IleS type 2 subfamily.</text>
</comment>
<reference key="1">
    <citation type="submission" date="2007-09" db="EMBL/GenBank/DDBJ databases">
        <title>Complete genome sequence of Rickettsia canadensis.</title>
        <authorList>
            <person name="Madan A."/>
            <person name="Fahey J."/>
            <person name="Helton E."/>
            <person name="Ketteman M."/>
            <person name="Madan A."/>
            <person name="Rodrigues S."/>
            <person name="Sanchez A."/>
            <person name="Whiting M."/>
            <person name="Dasch G."/>
            <person name="Eremeeva M."/>
        </authorList>
    </citation>
    <scope>NUCLEOTIDE SEQUENCE [LARGE SCALE GENOMIC DNA]</scope>
    <source>
        <strain>McKiel</strain>
    </source>
</reference>
<dbReference type="EC" id="6.1.1.5" evidence="1"/>
<dbReference type="EMBL" id="CP000409">
    <property type="protein sequence ID" value="ABV73282.1"/>
    <property type="molecule type" value="Genomic_DNA"/>
</dbReference>
<dbReference type="RefSeq" id="WP_012148481.1">
    <property type="nucleotide sequence ID" value="NC_009879.1"/>
</dbReference>
<dbReference type="SMR" id="A8EY49"/>
<dbReference type="STRING" id="293613.A1E_01685"/>
<dbReference type="KEGG" id="rcm:A1E_01685"/>
<dbReference type="eggNOG" id="COG0060">
    <property type="taxonomic scope" value="Bacteria"/>
</dbReference>
<dbReference type="HOGENOM" id="CLU_001493_1_1_5"/>
<dbReference type="Proteomes" id="UP000007056">
    <property type="component" value="Chromosome"/>
</dbReference>
<dbReference type="GO" id="GO:0005737">
    <property type="term" value="C:cytoplasm"/>
    <property type="evidence" value="ECO:0007669"/>
    <property type="project" value="UniProtKB-SubCell"/>
</dbReference>
<dbReference type="GO" id="GO:0002161">
    <property type="term" value="F:aminoacyl-tRNA deacylase activity"/>
    <property type="evidence" value="ECO:0007669"/>
    <property type="project" value="InterPro"/>
</dbReference>
<dbReference type="GO" id="GO:0005524">
    <property type="term" value="F:ATP binding"/>
    <property type="evidence" value="ECO:0007669"/>
    <property type="project" value="UniProtKB-UniRule"/>
</dbReference>
<dbReference type="GO" id="GO:0004822">
    <property type="term" value="F:isoleucine-tRNA ligase activity"/>
    <property type="evidence" value="ECO:0007669"/>
    <property type="project" value="UniProtKB-UniRule"/>
</dbReference>
<dbReference type="GO" id="GO:0000049">
    <property type="term" value="F:tRNA binding"/>
    <property type="evidence" value="ECO:0007669"/>
    <property type="project" value="InterPro"/>
</dbReference>
<dbReference type="GO" id="GO:0008270">
    <property type="term" value="F:zinc ion binding"/>
    <property type="evidence" value="ECO:0007669"/>
    <property type="project" value="UniProtKB-UniRule"/>
</dbReference>
<dbReference type="GO" id="GO:0006428">
    <property type="term" value="P:isoleucyl-tRNA aminoacylation"/>
    <property type="evidence" value="ECO:0007669"/>
    <property type="project" value="UniProtKB-UniRule"/>
</dbReference>
<dbReference type="CDD" id="cd07961">
    <property type="entry name" value="Anticodon_Ia_Ile_ABEc"/>
    <property type="match status" value="1"/>
</dbReference>
<dbReference type="CDD" id="cd00818">
    <property type="entry name" value="IleRS_core"/>
    <property type="match status" value="1"/>
</dbReference>
<dbReference type="FunFam" id="3.40.50.620:FF:000075">
    <property type="entry name" value="Isoleucine--tRNA ligase"/>
    <property type="match status" value="1"/>
</dbReference>
<dbReference type="FunFam" id="3.40.50.620:FF:000241">
    <property type="entry name" value="Isoleucine--tRNA ligase"/>
    <property type="match status" value="1"/>
</dbReference>
<dbReference type="Gene3D" id="3.40.50.620">
    <property type="entry name" value="HUPs"/>
    <property type="match status" value="2"/>
</dbReference>
<dbReference type="Gene3D" id="1.10.730.10">
    <property type="entry name" value="Isoleucyl-tRNA Synthetase, Domain 1"/>
    <property type="match status" value="1"/>
</dbReference>
<dbReference type="HAMAP" id="MF_02003">
    <property type="entry name" value="Ile_tRNA_synth_type2"/>
    <property type="match status" value="1"/>
</dbReference>
<dbReference type="InterPro" id="IPR001412">
    <property type="entry name" value="aa-tRNA-synth_I_CS"/>
</dbReference>
<dbReference type="InterPro" id="IPR002300">
    <property type="entry name" value="aa-tRNA-synth_Ia"/>
</dbReference>
<dbReference type="InterPro" id="IPR033709">
    <property type="entry name" value="Anticodon_Ile_ABEc"/>
</dbReference>
<dbReference type="InterPro" id="IPR002301">
    <property type="entry name" value="Ile-tRNA-ligase"/>
</dbReference>
<dbReference type="InterPro" id="IPR023586">
    <property type="entry name" value="Ile-tRNA-ligase_type2"/>
</dbReference>
<dbReference type="InterPro" id="IPR013155">
    <property type="entry name" value="M/V/L/I-tRNA-synth_anticd-bd"/>
</dbReference>
<dbReference type="InterPro" id="IPR014729">
    <property type="entry name" value="Rossmann-like_a/b/a_fold"/>
</dbReference>
<dbReference type="InterPro" id="IPR009080">
    <property type="entry name" value="tRNAsynth_Ia_anticodon-bd"/>
</dbReference>
<dbReference type="InterPro" id="IPR009008">
    <property type="entry name" value="Val/Leu/Ile-tRNA-synth_edit"/>
</dbReference>
<dbReference type="NCBIfam" id="TIGR00392">
    <property type="entry name" value="ileS"/>
    <property type="match status" value="1"/>
</dbReference>
<dbReference type="PANTHER" id="PTHR42780:SF1">
    <property type="entry name" value="ISOLEUCINE--TRNA LIGASE, CYTOPLASMIC"/>
    <property type="match status" value="1"/>
</dbReference>
<dbReference type="PANTHER" id="PTHR42780">
    <property type="entry name" value="SOLEUCYL-TRNA SYNTHETASE"/>
    <property type="match status" value="1"/>
</dbReference>
<dbReference type="Pfam" id="PF08264">
    <property type="entry name" value="Anticodon_1"/>
    <property type="match status" value="1"/>
</dbReference>
<dbReference type="Pfam" id="PF19302">
    <property type="entry name" value="DUF5915"/>
    <property type="match status" value="1"/>
</dbReference>
<dbReference type="Pfam" id="PF00133">
    <property type="entry name" value="tRNA-synt_1"/>
    <property type="match status" value="1"/>
</dbReference>
<dbReference type="PRINTS" id="PR00984">
    <property type="entry name" value="TRNASYNTHILE"/>
</dbReference>
<dbReference type="SUPFAM" id="SSF47323">
    <property type="entry name" value="Anticodon-binding domain of a subclass of class I aminoacyl-tRNA synthetases"/>
    <property type="match status" value="1"/>
</dbReference>
<dbReference type="SUPFAM" id="SSF52374">
    <property type="entry name" value="Nucleotidylyl transferase"/>
    <property type="match status" value="1"/>
</dbReference>
<dbReference type="SUPFAM" id="SSF50677">
    <property type="entry name" value="ValRS/IleRS/LeuRS editing domain"/>
    <property type="match status" value="1"/>
</dbReference>
<dbReference type="PROSITE" id="PS00178">
    <property type="entry name" value="AA_TRNA_LIGASE_I"/>
    <property type="match status" value="1"/>
</dbReference>
<evidence type="ECO:0000255" key="1">
    <source>
        <dbReference type="HAMAP-Rule" id="MF_02003"/>
    </source>
</evidence>
<sequence length="1079" mass="124622">MTNTKYYPEVSSNADFAAIEREILKLWQDNNIFQKSIDNRIKDAEFIFYDGPPFANGLPHYGHLLTGFIKDVYARYQTIKGKKVERRFGWDCHGLPAEMQSEQELGISGRLAITNFSIEKFNSHCRASVMKYTGEWEQYVTRQARWVDFKNSYKTMDTHFMESVLWAFKELYNKGLLYESMRVMPYSWACETPLSHFETRLDNSYRERADKAVTVSFMLRDKLPHSEYKEYRIFAWTTTPWTLPANLALAVGSDIDYALVPKNDICYIIAAASVSKYAKELELKGDEQFTIIKGSELEGLRYKPLFNYFENHPNSFKIFACDFVVEGDGTGVVHMAPGFGEDDQILCESKGIELVCPVDNSGKFTKEIPDLEGLQVFDANDKIIIKLKEQGNWLKTEQYIHNYPHCWRTDTPLIYKAVPSWYVKVTNFKDRIVELNQQINWIPSHVKDNVFGKWLENARDWSISRNRFWGTPLPVWKSDDPKYPRIDVYGSIEELEKDFGVKVTDLHRPFIDELTRANPDDPTGKSTMRRIEDVFDCWFESGSMPYSQAHYPFENKKWFEDHFPADFIVEYVAQTRGWFYTLMVLSTALFDRPPFLNCICHGVILDTTGQKLSKRLNNYADPLELFDKYGSDALRITMLSSNVVKGQELLIDKDGKMVFDTLRLFIKPIWNAYHFFTMYANADSLKGKSDFASENVLDIYILSKLKIAVQKIEKSLDNFDTQAAYHQVSEFFEVLNNWYIRRSRARFWKSEKDADKQNAYNTLYSCLETMAIAMSALVPMISEAIYLGLHNTVIPQLDYGISGDKPGAQDPIIKSQDGIRGCRNDNLSVHLCNYPKLSNFEVNHELVATMDTVLDICSNSLFIRSNENVRVRQPLASITIISKHNDKLKDFEDLIKDEINVKAIIYRDDLENYATTKLSLNFPMLGKRLPYKMKEIIAASKKGEWEATASALAICGETLKSEEYKLVLEPYSHIKGAASFADNSSLLILDLELTPELIKEGIARDIVRFIQQARKDADCSITDRILIEIISESDLSKIINIYGDYIKEQTLSEFAKDFTPDYVNEIELENHKIQLKIKR</sequence>
<accession>A8EY49</accession>
<feature type="chain" id="PRO_1000022160" description="Isoleucine--tRNA ligase">
    <location>
        <begin position="1"/>
        <end position="1079"/>
    </location>
</feature>
<feature type="short sequence motif" description="'HIGH' region">
    <location>
        <begin position="53"/>
        <end position="63"/>
    </location>
</feature>
<feature type="short sequence motif" description="'KMSKS' region">
    <location>
        <begin position="611"/>
        <end position="615"/>
    </location>
</feature>
<feature type="binding site" evidence="1">
    <location>
        <position position="614"/>
    </location>
    <ligand>
        <name>ATP</name>
        <dbReference type="ChEBI" id="CHEBI:30616"/>
    </ligand>
</feature>
<proteinExistence type="inferred from homology"/>
<gene>
    <name evidence="1" type="primary">ileS</name>
    <name type="ordered locus">A1E_01685</name>
</gene>